<feature type="chain" id="PRO_0000305817" description="Bifunctional protein FolD">
    <location>
        <begin position="1"/>
        <end position="282"/>
    </location>
</feature>
<feature type="binding site" evidence="1">
    <location>
        <begin position="165"/>
        <end position="167"/>
    </location>
    <ligand>
        <name>NADP(+)</name>
        <dbReference type="ChEBI" id="CHEBI:58349"/>
    </ligand>
</feature>
<feature type="binding site" evidence="1">
    <location>
        <position position="231"/>
    </location>
    <ligand>
        <name>NADP(+)</name>
        <dbReference type="ChEBI" id="CHEBI:58349"/>
    </ligand>
</feature>
<name>FOLD_FRATW</name>
<sequence>MILIDGKSLSKDLKERLATQVQEYKHHTAITPKLVAIIVGNDPASKTYVASKEKACAQVGIDSQVITLPEHTTESELLELIDQLNNDSSVHAILVQLPLPAHINKNNVIYSIKPEKDVDGFHPTNVGRLQLRDKKCLESCTPKGIMTMLREYGIKTEGAYAVVVGASNVVGKPVSQLLLNAKATVTTCHRFTTDLKSHTTKADILIVAVGKPNFITADMVKEGAVVIDVGINHVDGKIVGDVDFAAVKDKVAAITPVPGGVGPMTITELLYNTFQCAQELNR</sequence>
<reference key="1">
    <citation type="journal article" date="2007" name="PLoS ONE">
        <title>Complete genomic characterization of a pathogenic A.II strain of Francisella tularensis subspecies tularensis.</title>
        <authorList>
            <person name="Beckstrom-Sternberg S.M."/>
            <person name="Auerbach R.K."/>
            <person name="Godbole S."/>
            <person name="Pearson J.V."/>
            <person name="Beckstrom-Sternberg J.S."/>
            <person name="Deng Z."/>
            <person name="Munk C."/>
            <person name="Kubota K."/>
            <person name="Zhou Y."/>
            <person name="Bruce D."/>
            <person name="Noronha J."/>
            <person name="Scheuermann R.H."/>
            <person name="Wang A."/>
            <person name="Wei X."/>
            <person name="Wang J."/>
            <person name="Hao J."/>
            <person name="Wagner D.M."/>
            <person name="Brettin T.S."/>
            <person name="Brown N."/>
            <person name="Gilna P."/>
            <person name="Keim P.S."/>
        </authorList>
    </citation>
    <scope>NUCLEOTIDE SEQUENCE [LARGE SCALE GENOMIC DNA]</scope>
    <source>
        <strain>WY96-3418</strain>
    </source>
</reference>
<dbReference type="EC" id="1.5.1.5" evidence="1"/>
<dbReference type="EC" id="3.5.4.9" evidence="1"/>
<dbReference type="EMBL" id="CP000608">
    <property type="protein sequence ID" value="ABO47065.1"/>
    <property type="molecule type" value="Genomic_DNA"/>
</dbReference>
<dbReference type="RefSeq" id="WP_003020886.1">
    <property type="nucleotide sequence ID" value="NC_009257.1"/>
</dbReference>
<dbReference type="SMR" id="A4IYR4"/>
<dbReference type="KEGG" id="ftw:FTW_1287"/>
<dbReference type="HOGENOM" id="CLU_034045_2_1_6"/>
<dbReference type="UniPathway" id="UPA00193"/>
<dbReference type="GO" id="GO:0005829">
    <property type="term" value="C:cytosol"/>
    <property type="evidence" value="ECO:0007669"/>
    <property type="project" value="TreeGrafter"/>
</dbReference>
<dbReference type="GO" id="GO:0004477">
    <property type="term" value="F:methenyltetrahydrofolate cyclohydrolase activity"/>
    <property type="evidence" value="ECO:0007669"/>
    <property type="project" value="UniProtKB-UniRule"/>
</dbReference>
<dbReference type="GO" id="GO:0004488">
    <property type="term" value="F:methylenetetrahydrofolate dehydrogenase (NADP+) activity"/>
    <property type="evidence" value="ECO:0007669"/>
    <property type="project" value="UniProtKB-UniRule"/>
</dbReference>
<dbReference type="GO" id="GO:0000105">
    <property type="term" value="P:L-histidine biosynthetic process"/>
    <property type="evidence" value="ECO:0007669"/>
    <property type="project" value="UniProtKB-KW"/>
</dbReference>
<dbReference type="GO" id="GO:0009086">
    <property type="term" value="P:methionine biosynthetic process"/>
    <property type="evidence" value="ECO:0007669"/>
    <property type="project" value="UniProtKB-KW"/>
</dbReference>
<dbReference type="GO" id="GO:0006164">
    <property type="term" value="P:purine nucleotide biosynthetic process"/>
    <property type="evidence" value="ECO:0007669"/>
    <property type="project" value="UniProtKB-KW"/>
</dbReference>
<dbReference type="GO" id="GO:0035999">
    <property type="term" value="P:tetrahydrofolate interconversion"/>
    <property type="evidence" value="ECO:0007669"/>
    <property type="project" value="UniProtKB-UniRule"/>
</dbReference>
<dbReference type="CDD" id="cd01080">
    <property type="entry name" value="NAD_bind_m-THF_DH_Cyclohyd"/>
    <property type="match status" value="1"/>
</dbReference>
<dbReference type="FunFam" id="3.40.50.10860:FF:000001">
    <property type="entry name" value="Bifunctional protein FolD"/>
    <property type="match status" value="1"/>
</dbReference>
<dbReference type="FunFam" id="3.40.50.720:FF:000094">
    <property type="entry name" value="Bifunctional protein FolD"/>
    <property type="match status" value="1"/>
</dbReference>
<dbReference type="Gene3D" id="3.40.50.10860">
    <property type="entry name" value="Leucine Dehydrogenase, chain A, domain 1"/>
    <property type="match status" value="1"/>
</dbReference>
<dbReference type="Gene3D" id="3.40.50.720">
    <property type="entry name" value="NAD(P)-binding Rossmann-like Domain"/>
    <property type="match status" value="1"/>
</dbReference>
<dbReference type="HAMAP" id="MF_01576">
    <property type="entry name" value="THF_DHG_CYH"/>
    <property type="match status" value="1"/>
</dbReference>
<dbReference type="InterPro" id="IPR046346">
    <property type="entry name" value="Aminoacid_DH-like_N_sf"/>
</dbReference>
<dbReference type="InterPro" id="IPR036291">
    <property type="entry name" value="NAD(P)-bd_dom_sf"/>
</dbReference>
<dbReference type="InterPro" id="IPR000672">
    <property type="entry name" value="THF_DH/CycHdrlase"/>
</dbReference>
<dbReference type="InterPro" id="IPR020630">
    <property type="entry name" value="THF_DH/CycHdrlase_cat_dom"/>
</dbReference>
<dbReference type="InterPro" id="IPR020867">
    <property type="entry name" value="THF_DH/CycHdrlase_CS"/>
</dbReference>
<dbReference type="InterPro" id="IPR020631">
    <property type="entry name" value="THF_DH/CycHdrlase_NAD-bd_dom"/>
</dbReference>
<dbReference type="NCBIfam" id="NF008058">
    <property type="entry name" value="PRK10792.1"/>
    <property type="match status" value="1"/>
</dbReference>
<dbReference type="NCBIfam" id="NF010777">
    <property type="entry name" value="PRK14180.1"/>
    <property type="match status" value="1"/>
</dbReference>
<dbReference type="NCBIfam" id="NF010783">
    <property type="entry name" value="PRK14186.1"/>
    <property type="match status" value="1"/>
</dbReference>
<dbReference type="PANTHER" id="PTHR48099:SF5">
    <property type="entry name" value="C-1-TETRAHYDROFOLATE SYNTHASE, CYTOPLASMIC"/>
    <property type="match status" value="1"/>
</dbReference>
<dbReference type="PANTHER" id="PTHR48099">
    <property type="entry name" value="C-1-TETRAHYDROFOLATE SYNTHASE, CYTOPLASMIC-RELATED"/>
    <property type="match status" value="1"/>
</dbReference>
<dbReference type="Pfam" id="PF00763">
    <property type="entry name" value="THF_DHG_CYH"/>
    <property type="match status" value="1"/>
</dbReference>
<dbReference type="Pfam" id="PF02882">
    <property type="entry name" value="THF_DHG_CYH_C"/>
    <property type="match status" value="1"/>
</dbReference>
<dbReference type="PRINTS" id="PR00085">
    <property type="entry name" value="THFDHDRGNASE"/>
</dbReference>
<dbReference type="SUPFAM" id="SSF53223">
    <property type="entry name" value="Aminoacid dehydrogenase-like, N-terminal domain"/>
    <property type="match status" value="1"/>
</dbReference>
<dbReference type="SUPFAM" id="SSF51735">
    <property type="entry name" value="NAD(P)-binding Rossmann-fold domains"/>
    <property type="match status" value="1"/>
</dbReference>
<dbReference type="PROSITE" id="PS00766">
    <property type="entry name" value="THF_DHG_CYH_1"/>
    <property type="match status" value="1"/>
</dbReference>
<dbReference type="PROSITE" id="PS00767">
    <property type="entry name" value="THF_DHG_CYH_2"/>
    <property type="match status" value="1"/>
</dbReference>
<comment type="function">
    <text evidence="1">Catalyzes the oxidation of 5,10-methylenetetrahydrofolate to 5,10-methenyltetrahydrofolate and then the hydrolysis of 5,10-methenyltetrahydrofolate to 10-formyltetrahydrofolate.</text>
</comment>
<comment type="catalytic activity">
    <reaction evidence="1">
        <text>(6R)-5,10-methylene-5,6,7,8-tetrahydrofolate + NADP(+) = (6R)-5,10-methenyltetrahydrofolate + NADPH</text>
        <dbReference type="Rhea" id="RHEA:22812"/>
        <dbReference type="ChEBI" id="CHEBI:15636"/>
        <dbReference type="ChEBI" id="CHEBI:57455"/>
        <dbReference type="ChEBI" id="CHEBI:57783"/>
        <dbReference type="ChEBI" id="CHEBI:58349"/>
        <dbReference type="EC" id="1.5.1.5"/>
    </reaction>
</comment>
<comment type="catalytic activity">
    <reaction evidence="1">
        <text>(6R)-5,10-methenyltetrahydrofolate + H2O = (6R)-10-formyltetrahydrofolate + H(+)</text>
        <dbReference type="Rhea" id="RHEA:23700"/>
        <dbReference type="ChEBI" id="CHEBI:15377"/>
        <dbReference type="ChEBI" id="CHEBI:15378"/>
        <dbReference type="ChEBI" id="CHEBI:57455"/>
        <dbReference type="ChEBI" id="CHEBI:195366"/>
        <dbReference type="EC" id="3.5.4.9"/>
    </reaction>
</comment>
<comment type="pathway">
    <text evidence="1">One-carbon metabolism; tetrahydrofolate interconversion.</text>
</comment>
<comment type="subunit">
    <text evidence="1">Homodimer.</text>
</comment>
<comment type="similarity">
    <text evidence="1">Belongs to the tetrahydrofolate dehydrogenase/cyclohydrolase family.</text>
</comment>
<protein>
    <recommendedName>
        <fullName evidence="1">Bifunctional protein FolD</fullName>
    </recommendedName>
    <domain>
        <recommendedName>
            <fullName evidence="1">Methylenetetrahydrofolate dehydrogenase</fullName>
            <ecNumber evidence="1">1.5.1.5</ecNumber>
        </recommendedName>
    </domain>
    <domain>
        <recommendedName>
            <fullName evidence="1">Methenyltetrahydrofolate cyclohydrolase</fullName>
            <ecNumber evidence="1">3.5.4.9</ecNumber>
        </recommendedName>
    </domain>
</protein>
<evidence type="ECO:0000255" key="1">
    <source>
        <dbReference type="HAMAP-Rule" id="MF_01576"/>
    </source>
</evidence>
<keyword id="KW-0028">Amino-acid biosynthesis</keyword>
<keyword id="KW-0368">Histidine biosynthesis</keyword>
<keyword id="KW-0378">Hydrolase</keyword>
<keyword id="KW-0486">Methionine biosynthesis</keyword>
<keyword id="KW-0511">Multifunctional enzyme</keyword>
<keyword id="KW-0521">NADP</keyword>
<keyword id="KW-0554">One-carbon metabolism</keyword>
<keyword id="KW-0560">Oxidoreductase</keyword>
<keyword id="KW-0658">Purine biosynthesis</keyword>
<organism>
    <name type="scientific">Francisella tularensis subsp. tularensis (strain WY96-3418)</name>
    <dbReference type="NCBI Taxonomy" id="418136"/>
    <lineage>
        <taxon>Bacteria</taxon>
        <taxon>Pseudomonadati</taxon>
        <taxon>Pseudomonadota</taxon>
        <taxon>Gammaproteobacteria</taxon>
        <taxon>Thiotrichales</taxon>
        <taxon>Francisellaceae</taxon>
        <taxon>Francisella</taxon>
    </lineage>
</organism>
<proteinExistence type="inferred from homology"/>
<accession>A4IYR4</accession>
<gene>
    <name evidence="1" type="primary">folD</name>
    <name type="ordered locus">FTW_1287</name>
</gene>